<keyword id="KW-0378">Hydrolase</keyword>
<keyword id="KW-0460">Magnesium</keyword>
<keyword id="KW-0479">Metal-binding</keyword>
<keyword id="KW-1185">Reference proteome</keyword>
<protein>
    <recommendedName>
        <fullName evidence="1">5'(3')-deoxyribonucleotidase</fullName>
        <ecNumber evidence="1">3.1.3.-</ecNumber>
    </recommendedName>
</protein>
<accession>P68523</accession>
<accession>O31895</accession>
<accession>O64153</accession>
<organismHost>
    <name type="scientific">Bacillus pumilus</name>
    <name type="common">Bacillus mesentericus</name>
    <dbReference type="NCBI Taxonomy" id="1408"/>
</organismHost>
<organismHost>
    <name type="scientific">Bacillus subtilis</name>
    <dbReference type="NCBI Taxonomy" id="1423"/>
</organismHost>
<organism>
    <name type="scientific">Bacillus phage SPbeta</name>
    <name type="common">Bacillus phage SPBc2</name>
    <name type="synonym">Bacteriophage SP-beta</name>
    <dbReference type="NCBI Taxonomy" id="2932878"/>
    <lineage>
        <taxon>Viruses</taxon>
        <taxon>Duplodnaviria</taxon>
        <taxon>Heunggongvirae</taxon>
        <taxon>Uroviricota</taxon>
        <taxon>Caudoviricetes</taxon>
        <taxon>Spbetavirus</taxon>
        <taxon>Spbetavirus SPbeta</taxon>
    </lineage>
</organism>
<gene>
    <name type="primary">yorS</name>
    <name type="ordered locus">SPBc2p141</name>
</gene>
<proteinExistence type="inferred from homology"/>
<dbReference type="EC" id="3.1.3.-" evidence="1"/>
<dbReference type="EMBL" id="AF020713">
    <property type="protein sequence ID" value="AAC13113.1"/>
    <property type="molecule type" value="Genomic_DNA"/>
</dbReference>
<dbReference type="PIR" id="T12904">
    <property type="entry name" value="T12904"/>
</dbReference>
<dbReference type="RefSeq" id="NP_046692.1">
    <property type="nucleotide sequence ID" value="NC_001884.1"/>
</dbReference>
<dbReference type="SMR" id="P68523"/>
<dbReference type="GeneID" id="1261488"/>
<dbReference type="KEGG" id="vg:1261488"/>
<dbReference type="Proteomes" id="UP000009091">
    <property type="component" value="Genome"/>
</dbReference>
<dbReference type="GO" id="GO:0008253">
    <property type="term" value="F:5'-nucleotidase activity"/>
    <property type="evidence" value="ECO:0007669"/>
    <property type="project" value="InterPro"/>
</dbReference>
<dbReference type="GO" id="GO:0046872">
    <property type="term" value="F:metal ion binding"/>
    <property type="evidence" value="ECO:0007669"/>
    <property type="project" value="UniProtKB-KW"/>
</dbReference>
<dbReference type="GO" id="GO:0009223">
    <property type="term" value="P:pyrimidine deoxyribonucleotide catabolic process"/>
    <property type="evidence" value="ECO:0007669"/>
    <property type="project" value="TreeGrafter"/>
</dbReference>
<dbReference type="CDD" id="cd02587">
    <property type="entry name" value="HAD_5-3dNT"/>
    <property type="match status" value="1"/>
</dbReference>
<dbReference type="Gene3D" id="1.10.40.40">
    <property type="entry name" value="Deoxyribonucleotidase, domain 2"/>
    <property type="match status" value="1"/>
</dbReference>
<dbReference type="Gene3D" id="3.40.50.1000">
    <property type="entry name" value="HAD superfamily/HAD-like"/>
    <property type="match status" value="1"/>
</dbReference>
<dbReference type="InterPro" id="IPR010708">
    <property type="entry name" value="5'(3')-deoxyribonucleotidase"/>
</dbReference>
<dbReference type="InterPro" id="IPR036412">
    <property type="entry name" value="HAD-like_sf"/>
</dbReference>
<dbReference type="InterPro" id="IPR023214">
    <property type="entry name" value="HAD_sf"/>
</dbReference>
<dbReference type="PANTHER" id="PTHR16504">
    <property type="entry name" value="5'(3')-DEOXYRIBONUCLEOTIDASE"/>
    <property type="match status" value="1"/>
</dbReference>
<dbReference type="PANTHER" id="PTHR16504:SF4">
    <property type="entry name" value="5'(3')-DEOXYRIBONUCLEOTIDASE"/>
    <property type="match status" value="1"/>
</dbReference>
<dbReference type="Pfam" id="PF06941">
    <property type="entry name" value="NT5C"/>
    <property type="match status" value="1"/>
</dbReference>
<dbReference type="SFLD" id="SFLDG01146">
    <property type="entry name" value="C1.2.2"/>
    <property type="match status" value="1"/>
</dbReference>
<dbReference type="SFLD" id="SFLDG01126">
    <property type="entry name" value="C1.2:_Nucleotidase_Like"/>
    <property type="match status" value="1"/>
</dbReference>
<dbReference type="SUPFAM" id="SSF56784">
    <property type="entry name" value="HAD-like"/>
    <property type="match status" value="1"/>
</dbReference>
<feature type="chain" id="PRO_0000164374" description="5'(3')-deoxyribonucleotidase">
    <location>
        <begin position="1"/>
        <end position="172"/>
    </location>
</feature>
<feature type="active site" description="Nucleophile" evidence="3">
    <location>
        <position position="8"/>
    </location>
</feature>
<feature type="active site" description="Proton donor" evidence="3">
    <location>
        <position position="10"/>
    </location>
</feature>
<feature type="binding site" evidence="2">
    <location>
        <position position="8"/>
    </location>
    <ligand>
        <name>Mg(2+)</name>
        <dbReference type="ChEBI" id="CHEBI:18420"/>
    </ligand>
</feature>
<feature type="binding site" evidence="2">
    <location>
        <position position="10"/>
    </location>
    <ligand>
        <name>Mg(2+)</name>
        <dbReference type="ChEBI" id="CHEBI:18420"/>
    </ligand>
</feature>
<feature type="binding site" evidence="2">
    <location>
        <position position="132"/>
    </location>
    <ligand>
        <name>Mg(2+)</name>
        <dbReference type="ChEBI" id="CHEBI:18420"/>
    </ligand>
</feature>
<name>53DR_BPSPB</name>
<comment type="function">
    <text evidence="1">Dephosphorylates nucleoside monophosphates such as the 5' and 2'(3')-phosphates of deoxyribonucleotides in vitro. Also catalyzes the dephosphorylation of coenzyme A (CoA), pyridoxal-5'-phosphate (PLP), riboflavine-5-phosphate (FMN) and nicotinamide adenine dinucleotide phosphate (NADP) in vitro.</text>
</comment>
<comment type="cofactor">
    <cofactor evidence="1">
        <name>Mg(2+)</name>
        <dbReference type="ChEBI" id="CHEBI:18420"/>
    </cofactor>
</comment>
<comment type="similarity">
    <text evidence="3">Belongs to the 5'(3')-deoxyribonucleotidase family.</text>
</comment>
<evidence type="ECO:0000250" key="1">
    <source>
        <dbReference type="UniProtKB" id="P68522"/>
    </source>
</evidence>
<evidence type="ECO:0000250" key="2">
    <source>
        <dbReference type="UniProtKB" id="Q8CTG7"/>
    </source>
</evidence>
<evidence type="ECO:0000305" key="3"/>
<reference key="1">
    <citation type="journal article" date="1999" name="Microbiology">
        <title>Nucleotide sequence of the Bacillus subtilis temperate bacteriophage SPbetac2.</title>
        <authorList>
            <person name="Lazarevic V."/>
            <person name="Duesterhoeft A."/>
            <person name="Soldo B."/>
            <person name="Hilbert H."/>
            <person name="Mauel C."/>
            <person name="Karamata D."/>
        </authorList>
    </citation>
    <scope>NUCLEOTIDE SEQUENCE [LARGE SCALE GENOMIC DNA]</scope>
</reference>
<sequence length="172" mass="20417">MKKVIAIDMDQVLADLLSDWVAYINTYDDPFLKEKDILCWDIKKYTNTNNNVYRHLDYDLFRNLNVIEGSQRVTKELMKKYEVYVVTTATNHPDSLKAKLEWLTEYFPFIPHSNVVLCGNKNIIKADIMIDDGIHNLESFEGMKILFDAPHNRNENRFIRVMNWEEIERKLL</sequence>